<reference key="1">
    <citation type="submission" date="2003-11" db="EMBL/GenBank/DDBJ databases">
        <authorList>
            <person name="Masui R."/>
            <person name="Inoue Y."/>
            <person name="Shibata T."/>
            <person name="Miki K."/>
            <person name="Yokoyama S."/>
            <person name="Kuramitsu S."/>
        </authorList>
    </citation>
    <scope>NUCLEOTIDE SEQUENCE [GENOMIC DNA]</scope>
    <source>
        <strain>ATCC 27634 / DSM 579 / HB8</strain>
    </source>
</reference>
<reference key="2">
    <citation type="submission" date="2004-11" db="EMBL/GenBank/DDBJ databases">
        <title>Complete genome sequence of Thermus thermophilus HB8.</title>
        <authorList>
            <person name="Masui R."/>
            <person name="Kurokawa K."/>
            <person name="Nakagawa N."/>
            <person name="Tokunaga F."/>
            <person name="Koyama Y."/>
            <person name="Shibata T."/>
            <person name="Oshima T."/>
            <person name="Yokoyama S."/>
            <person name="Yasunaga T."/>
            <person name="Kuramitsu S."/>
        </authorList>
    </citation>
    <scope>NUCLEOTIDE SEQUENCE [LARGE SCALE GENOMIC DNA]</scope>
    <source>
        <strain>ATCC 27634 / DSM 579 / HB8</strain>
    </source>
</reference>
<reference evidence="4 5 6" key="3">
    <citation type="journal article" date="2004" name="J. Biol. Chem.">
        <title>Structural basis of the substrate-specific two-step catalysis of long chain fatty acyl-CoA synthetase dimer.</title>
        <authorList>
            <person name="Hisanaga Y."/>
            <person name="Ago H."/>
            <person name="Nakagawa N."/>
            <person name="Hamada K."/>
            <person name="Ida K."/>
            <person name="Yamamoto M."/>
            <person name="Hori T."/>
            <person name="Arii Y."/>
            <person name="Sugahara M."/>
            <person name="Kuramitsu S."/>
            <person name="Yokoyama S."/>
            <person name="Miyano M."/>
        </authorList>
    </citation>
    <scope>X-RAY CRYSTALLOGRAPHY (2.30 ANGSTROMS) OF APOENZYME AND COMPLEXES WITH AN ATP ANALOG; MYRISTOYL-AMP INTERMEDIATE AND MAGNESIUM</scope>
    <scope>FUNCTION</scope>
    <scope>CATALYTIC ACTIVITY</scope>
    <scope>SUBSTRATE SPECIFICITY</scope>
    <scope>CATALYTIC MECHANISM</scope>
    <scope>SUBUNIT</scope>
    <scope>COFACTOR</scope>
</reference>
<keyword id="KW-0002">3D-structure</keyword>
<keyword id="KW-0067">ATP-binding</keyword>
<keyword id="KW-0276">Fatty acid metabolism</keyword>
<keyword id="KW-0436">Ligase</keyword>
<keyword id="KW-0443">Lipid metabolism</keyword>
<keyword id="KW-0460">Magnesium</keyword>
<keyword id="KW-0479">Metal-binding</keyword>
<keyword id="KW-0547">Nucleotide-binding</keyword>
<keyword id="KW-1185">Reference proteome</keyword>
<organism>
    <name type="scientific">Thermus thermophilus (strain ATCC 27634 / DSM 579 / HB8)</name>
    <dbReference type="NCBI Taxonomy" id="300852"/>
    <lineage>
        <taxon>Bacteria</taxon>
        <taxon>Thermotogati</taxon>
        <taxon>Deinococcota</taxon>
        <taxon>Deinococci</taxon>
        <taxon>Thermales</taxon>
        <taxon>Thermaceae</taxon>
        <taxon>Thermus</taxon>
    </lineage>
</organism>
<dbReference type="EC" id="6.2.1.3" evidence="1"/>
<dbReference type="EMBL" id="AB126656">
    <property type="protein sequence ID" value="BAD20228.1"/>
    <property type="molecule type" value="Genomic_DNA"/>
</dbReference>
<dbReference type="EMBL" id="AP008226">
    <property type="protein sequence ID" value="BAD70427.1"/>
    <property type="molecule type" value="Genomic_DNA"/>
</dbReference>
<dbReference type="RefSeq" id="YP_143870.1">
    <property type="nucleotide sequence ID" value="NC_006461.1"/>
</dbReference>
<dbReference type="PDB" id="1ULT">
    <property type="method" value="X-ray"/>
    <property type="resolution" value="2.55 A"/>
    <property type="chains" value="A/B=1-541"/>
</dbReference>
<dbReference type="PDB" id="1V25">
    <property type="method" value="X-ray"/>
    <property type="resolution" value="2.30 A"/>
    <property type="chains" value="A/B=1-541"/>
</dbReference>
<dbReference type="PDB" id="1V26">
    <property type="method" value="X-ray"/>
    <property type="resolution" value="2.50 A"/>
    <property type="chains" value="A/B=1-541"/>
</dbReference>
<dbReference type="PDBsum" id="1ULT"/>
<dbReference type="PDBsum" id="1V25"/>
<dbReference type="PDBsum" id="1V26"/>
<dbReference type="SMR" id="Q5SKN9"/>
<dbReference type="EnsemblBacteria" id="BAD70427">
    <property type="protein sequence ID" value="BAD70427"/>
    <property type="gene ID" value="BAD70427"/>
</dbReference>
<dbReference type="KEGG" id="ttj:TTHA0604"/>
<dbReference type="PATRIC" id="fig|300852.9.peg.602"/>
<dbReference type="eggNOG" id="COG0318">
    <property type="taxonomic scope" value="Bacteria"/>
</dbReference>
<dbReference type="HOGENOM" id="CLU_000022_59_5_0"/>
<dbReference type="PhylomeDB" id="Q5SKN9"/>
<dbReference type="UniPathway" id="UPA00199"/>
<dbReference type="EvolutionaryTrace" id="Q5SKN9"/>
<dbReference type="Proteomes" id="UP000000532">
    <property type="component" value="Chromosome"/>
</dbReference>
<dbReference type="GO" id="GO:0005524">
    <property type="term" value="F:ATP binding"/>
    <property type="evidence" value="ECO:0000314"/>
    <property type="project" value="UniProtKB"/>
</dbReference>
<dbReference type="GO" id="GO:0042802">
    <property type="term" value="F:identical protein binding"/>
    <property type="evidence" value="ECO:0000314"/>
    <property type="project" value="UniProtKB"/>
</dbReference>
<dbReference type="GO" id="GO:0004467">
    <property type="term" value="F:long-chain fatty acid-CoA ligase activity"/>
    <property type="evidence" value="ECO:0000314"/>
    <property type="project" value="UniProtKB"/>
</dbReference>
<dbReference type="GO" id="GO:0000287">
    <property type="term" value="F:magnesium ion binding"/>
    <property type="evidence" value="ECO:0000314"/>
    <property type="project" value="UniProtKB"/>
</dbReference>
<dbReference type="GO" id="GO:0042803">
    <property type="term" value="F:protein homodimerization activity"/>
    <property type="evidence" value="ECO:0000314"/>
    <property type="project" value="UniProtKB"/>
</dbReference>
<dbReference type="CDD" id="cd12119">
    <property type="entry name" value="ttLC_FACS_AlkK_like"/>
    <property type="match status" value="1"/>
</dbReference>
<dbReference type="FunFam" id="3.30.300.30:FF:000008">
    <property type="entry name" value="2,3-dihydroxybenzoate-AMP ligase"/>
    <property type="match status" value="1"/>
</dbReference>
<dbReference type="Gene3D" id="3.30.300.30">
    <property type="match status" value="1"/>
</dbReference>
<dbReference type="Gene3D" id="3.40.50.12780">
    <property type="entry name" value="N-terminal domain of ligase-like"/>
    <property type="match status" value="1"/>
</dbReference>
<dbReference type="InterPro" id="IPR025110">
    <property type="entry name" value="AMP-bd_C"/>
</dbReference>
<dbReference type="InterPro" id="IPR045851">
    <property type="entry name" value="AMP-bd_C_sf"/>
</dbReference>
<dbReference type="InterPro" id="IPR020845">
    <property type="entry name" value="AMP-binding_CS"/>
</dbReference>
<dbReference type="InterPro" id="IPR000873">
    <property type="entry name" value="AMP-dep_synth/lig_dom"/>
</dbReference>
<dbReference type="InterPro" id="IPR042099">
    <property type="entry name" value="ANL_N_sf"/>
</dbReference>
<dbReference type="NCBIfam" id="NF004837">
    <property type="entry name" value="PRK06187.1"/>
    <property type="match status" value="1"/>
</dbReference>
<dbReference type="PANTHER" id="PTHR43859">
    <property type="entry name" value="ACYL-ACTIVATING ENZYME"/>
    <property type="match status" value="1"/>
</dbReference>
<dbReference type="PANTHER" id="PTHR43859:SF4">
    <property type="entry name" value="BUTANOATE--COA LIGASE AAE1-RELATED"/>
    <property type="match status" value="1"/>
</dbReference>
<dbReference type="Pfam" id="PF00501">
    <property type="entry name" value="AMP-binding"/>
    <property type="match status" value="1"/>
</dbReference>
<dbReference type="Pfam" id="PF13193">
    <property type="entry name" value="AMP-binding_C"/>
    <property type="match status" value="1"/>
</dbReference>
<dbReference type="SUPFAM" id="SSF56801">
    <property type="entry name" value="Acetyl-CoA synthetase-like"/>
    <property type="match status" value="1"/>
</dbReference>
<dbReference type="PROSITE" id="PS00455">
    <property type="entry name" value="AMP_BINDING"/>
    <property type="match status" value="1"/>
</dbReference>
<gene>
    <name type="ordered locus">TTHA0604</name>
</gene>
<sequence length="541" mass="59571">MEGERMNAFPSTMMDEELNLWDFLERAAALFGRKEVVSRLHTGEVHRTTYAEVYQRARRLMGGLRALGVGVGDRVATLGFNHFRHLEAYFAVPGMGAVLHTANPRLSPKEIAYILNHAEDKVLLFDPNLLPLVEAIRGELKTVQHFVVMDEKAPEGYLAYEEALGEEADPVRVPERAACGMAYTTGTTGLPKGVVYSHRALVLHSLAASLVDGTALSEKDVVLPVVPMFHVNAWCLPYAATLVGAKQVLPGPRLDPASLVELFDGEGVTFTAGVPTVWLALADYLESTGHRLKTLRRLVVGGSAAPRSLIARFERMGVEVRQGYGLTETSPVVVQNFVKSHLESLSEEEKLTLKAKTGLPIPLVRLRVADEEGRPVPKDGKALGEVQLKGPWITGGYYGNEEATRSALTPDGFFRTGDIAVWDEEGYVEIKDRLKDLIKSGGEWISSVDLENALMGHPKVKEAAVVAIPHPKWQERPLAVVVPRGEKPTPEELNEHLLKAGFAKWQLPDAYVFAEEIPRTSAGKFLKRALREQYKNYYGGA</sequence>
<comment type="function">
    <text evidence="1">Catalyzes the esterification of a number of long chain fatty acids with CoA, resulting in the formation of long-chain fatty acyl-CoA. Myristate (C14) is the most efficiently processed fatty acid, followed by palmitate (C16). Also catalyzes the esterification of stearate (C18) and laurate (C12), but at lower efficiency. Does not catalyze the esterification of the unsaturated fatty acids mysteroleic and palmitoleic acids in vitro.</text>
</comment>
<comment type="catalytic activity">
    <reaction evidence="1">
        <text>a long-chain fatty acid + ATP + CoA = a long-chain fatty acyl-CoA + AMP + diphosphate</text>
        <dbReference type="Rhea" id="RHEA:15421"/>
        <dbReference type="ChEBI" id="CHEBI:30616"/>
        <dbReference type="ChEBI" id="CHEBI:33019"/>
        <dbReference type="ChEBI" id="CHEBI:57287"/>
        <dbReference type="ChEBI" id="CHEBI:57560"/>
        <dbReference type="ChEBI" id="CHEBI:83139"/>
        <dbReference type="ChEBI" id="CHEBI:456215"/>
        <dbReference type="EC" id="6.2.1.3"/>
    </reaction>
    <physiologicalReaction direction="left-to-right" evidence="3">
        <dbReference type="Rhea" id="RHEA:15422"/>
    </physiologicalReaction>
</comment>
<comment type="catalytic activity">
    <reaction evidence="1">
        <text>tetradecanoate + ATP + CoA = tetradecanoyl-CoA + AMP + diphosphate</text>
        <dbReference type="Rhea" id="RHEA:33619"/>
        <dbReference type="ChEBI" id="CHEBI:30616"/>
        <dbReference type="ChEBI" id="CHEBI:30807"/>
        <dbReference type="ChEBI" id="CHEBI:33019"/>
        <dbReference type="ChEBI" id="CHEBI:57287"/>
        <dbReference type="ChEBI" id="CHEBI:57385"/>
        <dbReference type="ChEBI" id="CHEBI:456215"/>
    </reaction>
    <physiologicalReaction direction="left-to-right" evidence="3">
        <dbReference type="Rhea" id="RHEA:33620"/>
    </physiologicalReaction>
</comment>
<comment type="catalytic activity">
    <reaction evidence="1">
        <text>hexadecanoate + ATP + CoA = hexadecanoyl-CoA + AMP + diphosphate</text>
        <dbReference type="Rhea" id="RHEA:30751"/>
        <dbReference type="ChEBI" id="CHEBI:7896"/>
        <dbReference type="ChEBI" id="CHEBI:30616"/>
        <dbReference type="ChEBI" id="CHEBI:33019"/>
        <dbReference type="ChEBI" id="CHEBI:57287"/>
        <dbReference type="ChEBI" id="CHEBI:57379"/>
        <dbReference type="ChEBI" id="CHEBI:456215"/>
    </reaction>
    <physiologicalReaction direction="left-to-right" evidence="3">
        <dbReference type="Rhea" id="RHEA:30752"/>
    </physiologicalReaction>
</comment>
<comment type="cofactor">
    <cofactor evidence="1">
        <name>Mg(2+)</name>
        <dbReference type="ChEBI" id="CHEBI:18420"/>
    </cofactor>
</comment>
<comment type="pathway">
    <text>Lipid metabolism; fatty acid metabolism.</text>
</comment>
<comment type="subunit">
    <text evidence="1">Forms a domain swapped homodimer.</text>
</comment>
<comment type="miscellaneous">
    <text>Upon ATP binding, the fatty acid-binding tunnel gated by the aromatic residue Trp-234 opens to the ATP-binding site. The acylation reaction proceeds in two steps, via the formation of a fatty acyl-AMP intermediate, and is proposed to follow a unidirectional Bi Uni Uni Bi ping-pong mechanism.</text>
</comment>
<comment type="similarity">
    <text evidence="2">Belongs to the ATP-dependent AMP-binding enzyme family.</text>
</comment>
<name>LCFCS_THET8</name>
<proteinExistence type="evidence at protein level"/>
<feature type="chain" id="PRO_0000419182" description="Long-chain-fatty-acid--CoA ligase">
    <location>
        <begin position="1"/>
        <end position="541"/>
    </location>
</feature>
<feature type="binding site" evidence="1 5">
    <location>
        <position position="184"/>
    </location>
    <ligand>
        <name>Mg(2+)</name>
        <dbReference type="ChEBI" id="CHEBI:18420"/>
    </ligand>
</feature>
<feature type="binding site" evidence="3 5">
    <location>
        <position position="231"/>
    </location>
    <ligand>
        <name>ATP</name>
        <dbReference type="ChEBI" id="CHEBI:30616"/>
    </ligand>
</feature>
<feature type="binding site" evidence="3 5">
    <location>
        <position position="234"/>
    </location>
    <ligand>
        <name>ATP</name>
        <dbReference type="ChEBI" id="CHEBI:30616"/>
    </ligand>
</feature>
<feature type="binding site" evidence="1 6">
    <location>
        <position position="302"/>
    </location>
    <ligand>
        <name>tetradecanoyl-AMP</name>
        <dbReference type="ChEBI" id="CHEBI:83626"/>
    </ligand>
</feature>
<feature type="binding site" evidence="1 6">
    <location>
        <position position="322"/>
    </location>
    <ligand>
        <name>tetradecanoyl-AMP</name>
        <dbReference type="ChEBI" id="CHEBI:83626"/>
    </ligand>
</feature>
<feature type="binding site" evidence="3 5">
    <location>
        <position position="323"/>
    </location>
    <ligand>
        <name>ATP</name>
        <dbReference type="ChEBI" id="CHEBI:30616"/>
    </ligand>
</feature>
<feature type="binding site" evidence="1 6">
    <location>
        <position position="323"/>
    </location>
    <ligand>
        <name>tetradecanoyl-AMP</name>
        <dbReference type="ChEBI" id="CHEBI:83626"/>
    </ligand>
</feature>
<feature type="binding site" evidence="3 5">
    <location>
        <position position="327"/>
    </location>
    <ligand>
        <name>ATP</name>
        <dbReference type="ChEBI" id="CHEBI:30616"/>
    </ligand>
</feature>
<feature type="binding site" evidence="1 6">
    <location>
        <position position="327"/>
    </location>
    <ligand>
        <name>tetradecanoyl-AMP</name>
        <dbReference type="ChEBI" id="CHEBI:83626"/>
    </ligand>
</feature>
<feature type="binding site" evidence="1 5">
    <location>
        <position position="328"/>
    </location>
    <ligand>
        <name>Mg(2+)</name>
        <dbReference type="ChEBI" id="CHEBI:18420"/>
    </ligand>
</feature>
<feature type="binding site" evidence="3 5">
    <location>
        <position position="418"/>
    </location>
    <ligand>
        <name>ATP</name>
        <dbReference type="ChEBI" id="CHEBI:30616"/>
    </ligand>
</feature>
<feature type="binding site" evidence="1 6">
    <location>
        <position position="418"/>
    </location>
    <ligand>
        <name>tetradecanoyl-AMP</name>
        <dbReference type="ChEBI" id="CHEBI:83626"/>
    </ligand>
</feature>
<feature type="binding site" evidence="3 5">
    <location>
        <position position="435"/>
    </location>
    <ligand>
        <name>ATP</name>
        <dbReference type="ChEBI" id="CHEBI:30616"/>
    </ligand>
</feature>
<feature type="binding site" evidence="1 6">
    <location>
        <position position="435"/>
    </location>
    <ligand>
        <name>tetradecanoyl-AMP</name>
        <dbReference type="ChEBI" id="CHEBI:83626"/>
    </ligand>
</feature>
<feature type="binding site" evidence="3 5">
    <location>
        <position position="439"/>
    </location>
    <ligand>
        <name>ATP</name>
        <dbReference type="ChEBI" id="CHEBI:30616"/>
    </ligand>
</feature>
<feature type="binding site" evidence="1 6">
    <location>
        <position position="439"/>
    </location>
    <ligand>
        <name>tetradecanoyl-AMP</name>
        <dbReference type="ChEBI" id="CHEBI:83626"/>
    </ligand>
</feature>
<feature type="binding site" evidence="3 5">
    <location>
        <position position="444"/>
    </location>
    <ligand>
        <name>ATP</name>
        <dbReference type="ChEBI" id="CHEBI:30616"/>
    </ligand>
</feature>
<feature type="helix" evidence="8">
    <location>
        <begin position="21"/>
        <end position="30"/>
    </location>
</feature>
<feature type="strand" evidence="8">
    <location>
        <begin position="35"/>
        <end position="39"/>
    </location>
</feature>
<feature type="strand" evidence="8">
    <location>
        <begin position="45"/>
        <end position="49"/>
    </location>
</feature>
<feature type="helix" evidence="8">
    <location>
        <begin position="50"/>
        <end position="66"/>
    </location>
</feature>
<feature type="strand" evidence="8">
    <location>
        <begin position="74"/>
        <end position="78"/>
    </location>
</feature>
<feature type="helix" evidence="8">
    <location>
        <begin position="83"/>
        <end position="94"/>
    </location>
</feature>
<feature type="strand" evidence="8">
    <location>
        <begin position="98"/>
        <end position="101"/>
    </location>
</feature>
<feature type="helix" evidence="8">
    <location>
        <begin position="108"/>
        <end position="118"/>
    </location>
</feature>
<feature type="strand" evidence="8">
    <location>
        <begin position="121"/>
        <end position="125"/>
    </location>
</feature>
<feature type="helix" evidence="8">
    <location>
        <begin position="127"/>
        <end position="129"/>
    </location>
</feature>
<feature type="helix" evidence="8">
    <location>
        <begin position="130"/>
        <end position="136"/>
    </location>
</feature>
<feature type="helix" evidence="8">
    <location>
        <begin position="137"/>
        <end position="139"/>
    </location>
</feature>
<feature type="strand" evidence="8">
    <location>
        <begin position="145"/>
        <end position="151"/>
    </location>
</feature>
<feature type="helix" evidence="8">
    <location>
        <begin position="160"/>
        <end position="163"/>
    </location>
</feature>
<feature type="strand" evidence="8">
    <location>
        <begin position="177"/>
        <end position="184"/>
    </location>
</feature>
<feature type="strand" evidence="8">
    <location>
        <begin position="186"/>
        <end position="190"/>
    </location>
</feature>
<feature type="strand" evidence="8">
    <location>
        <begin position="192"/>
        <end position="197"/>
    </location>
</feature>
<feature type="helix" evidence="8">
    <location>
        <begin position="198"/>
        <end position="207"/>
    </location>
</feature>
<feature type="turn" evidence="8">
    <location>
        <begin position="211"/>
        <end position="214"/>
    </location>
</feature>
<feature type="strand" evidence="8">
    <location>
        <begin position="221"/>
        <end position="224"/>
    </location>
</feature>
<feature type="helix" evidence="8">
    <location>
        <begin position="231"/>
        <end position="234"/>
    </location>
</feature>
<feature type="helix" evidence="8">
    <location>
        <begin position="236"/>
        <end position="243"/>
    </location>
</feature>
<feature type="strand" evidence="8">
    <location>
        <begin position="246"/>
        <end position="249"/>
    </location>
</feature>
<feature type="helix" evidence="8">
    <location>
        <begin position="256"/>
        <end position="265"/>
    </location>
</feature>
<feature type="strand" evidence="8">
    <location>
        <begin position="270"/>
        <end position="273"/>
    </location>
</feature>
<feature type="helix" evidence="8">
    <location>
        <begin position="275"/>
        <end position="288"/>
    </location>
</feature>
<feature type="strand" evidence="8">
    <location>
        <begin position="297"/>
        <end position="300"/>
    </location>
</feature>
<feature type="helix" evidence="8">
    <location>
        <begin position="307"/>
        <end position="315"/>
    </location>
</feature>
<feature type="strand" evidence="8">
    <location>
        <begin position="319"/>
        <end position="325"/>
    </location>
</feature>
<feature type="helix" evidence="8">
    <location>
        <begin position="327"/>
        <end position="329"/>
    </location>
</feature>
<feature type="strand" evidence="8">
    <location>
        <begin position="330"/>
        <end position="335"/>
    </location>
</feature>
<feature type="helix" evidence="8">
    <location>
        <begin position="340"/>
        <end position="342"/>
    </location>
</feature>
<feature type="helix" evidence="8">
    <location>
        <begin position="347"/>
        <end position="354"/>
    </location>
</feature>
<feature type="strand" evidence="8">
    <location>
        <begin position="358"/>
        <end position="360"/>
    </location>
</feature>
<feature type="strand" evidence="8">
    <location>
        <begin position="365"/>
        <end position="369"/>
    </location>
</feature>
<feature type="strand" evidence="8">
    <location>
        <begin position="378"/>
        <end position="380"/>
    </location>
</feature>
<feature type="strand" evidence="8">
    <location>
        <begin position="384"/>
        <end position="390"/>
    </location>
</feature>
<feature type="strand" evidence="8">
    <location>
        <begin position="393"/>
        <end position="396"/>
    </location>
</feature>
<feature type="helix" evidence="8">
    <location>
        <begin position="401"/>
        <end position="405"/>
    </location>
</feature>
<feature type="strand" evidence="8">
    <location>
        <begin position="414"/>
        <end position="422"/>
    </location>
</feature>
<feature type="strand" evidence="8">
    <location>
        <begin position="428"/>
        <end position="435"/>
    </location>
</feature>
<feature type="strand" evidence="8">
    <location>
        <begin position="437"/>
        <end position="440"/>
    </location>
</feature>
<feature type="strand" evidence="8">
    <location>
        <begin position="443"/>
        <end position="446"/>
    </location>
</feature>
<feature type="helix" evidence="8">
    <location>
        <begin position="447"/>
        <end position="451"/>
    </location>
</feature>
<feature type="strand" evidence="8">
    <location>
        <begin position="465"/>
        <end position="469"/>
    </location>
</feature>
<feature type="strand" evidence="8">
    <location>
        <begin position="471"/>
        <end position="479"/>
    </location>
</feature>
<feature type="helix" evidence="8">
    <location>
        <begin position="495"/>
        <end position="499"/>
    </location>
</feature>
<feature type="turn" evidence="8">
    <location>
        <begin position="504"/>
        <end position="506"/>
    </location>
</feature>
<feature type="strand" evidence="7">
    <location>
        <begin position="509"/>
        <end position="513"/>
    </location>
</feature>
<feature type="helix" evidence="8">
    <location>
        <begin position="530"/>
        <end position="533"/>
    </location>
</feature>
<feature type="turn" evidence="9">
    <location>
        <begin position="535"/>
        <end position="538"/>
    </location>
</feature>
<protein>
    <recommendedName>
        <fullName>Long-chain-fatty-acid--CoA ligase</fullName>
        <ecNumber evidence="1">6.2.1.3</ecNumber>
    </recommendedName>
    <alternativeName>
        <fullName>Long-chain fatty acyl-CoA synthetase</fullName>
        <shortName>LC-FACS</shortName>
    </alternativeName>
</protein>
<evidence type="ECO:0000269" key="1">
    <source>
    </source>
</evidence>
<evidence type="ECO:0000305" key="2"/>
<evidence type="ECO:0000305" key="3">
    <source>
    </source>
</evidence>
<evidence type="ECO:0007744" key="4">
    <source>
        <dbReference type="PDB" id="1ULT"/>
    </source>
</evidence>
<evidence type="ECO:0007744" key="5">
    <source>
        <dbReference type="PDB" id="1V25"/>
    </source>
</evidence>
<evidence type="ECO:0007744" key="6">
    <source>
        <dbReference type="PDB" id="1V26"/>
    </source>
</evidence>
<evidence type="ECO:0007829" key="7">
    <source>
        <dbReference type="PDB" id="1ULT"/>
    </source>
</evidence>
<evidence type="ECO:0007829" key="8">
    <source>
        <dbReference type="PDB" id="1V25"/>
    </source>
</evidence>
<evidence type="ECO:0007829" key="9">
    <source>
        <dbReference type="PDB" id="1V26"/>
    </source>
</evidence>
<accession>Q5SKN9</accession>
<accession>Q6L8F0</accession>